<gene>
    <name evidence="1" type="primary">lpxD</name>
    <name type="ordered locus">PCC7424_3493</name>
</gene>
<proteinExistence type="inferred from homology"/>
<evidence type="ECO:0000255" key="1">
    <source>
        <dbReference type="HAMAP-Rule" id="MF_00523"/>
    </source>
</evidence>
<organism>
    <name type="scientific">Gloeothece citriformis (strain PCC 7424)</name>
    <name type="common">Cyanothece sp. (strain PCC 7424)</name>
    <dbReference type="NCBI Taxonomy" id="65393"/>
    <lineage>
        <taxon>Bacteria</taxon>
        <taxon>Bacillati</taxon>
        <taxon>Cyanobacteriota</taxon>
        <taxon>Cyanophyceae</taxon>
        <taxon>Oscillatoriophycideae</taxon>
        <taxon>Chroococcales</taxon>
        <taxon>Aphanothecaceae</taxon>
        <taxon>Gloeothece</taxon>
        <taxon>Gloeothece citriformis</taxon>
    </lineage>
</organism>
<comment type="function">
    <text evidence="1">Catalyzes the N-acylation of UDP-3-O-acylglucosamine using 3-hydroxyacyl-ACP as the acyl donor. Is involved in the biosynthesis of lipid A, a phosphorylated glycolipid that anchors the lipopolysaccharide to the outer membrane of the cell.</text>
</comment>
<comment type="catalytic activity">
    <reaction evidence="1">
        <text>a UDP-3-O-[(3R)-3-hydroxyacyl]-alpha-D-glucosamine + a (3R)-hydroxyacyl-[ACP] = a UDP-2-N,3-O-bis[(3R)-3-hydroxyacyl]-alpha-D-glucosamine + holo-[ACP] + H(+)</text>
        <dbReference type="Rhea" id="RHEA:53836"/>
        <dbReference type="Rhea" id="RHEA-COMP:9685"/>
        <dbReference type="Rhea" id="RHEA-COMP:9945"/>
        <dbReference type="ChEBI" id="CHEBI:15378"/>
        <dbReference type="ChEBI" id="CHEBI:64479"/>
        <dbReference type="ChEBI" id="CHEBI:78827"/>
        <dbReference type="ChEBI" id="CHEBI:137740"/>
        <dbReference type="ChEBI" id="CHEBI:137748"/>
        <dbReference type="EC" id="2.3.1.191"/>
    </reaction>
</comment>
<comment type="pathway">
    <text evidence="1">Bacterial outer membrane biogenesis; LPS lipid A biosynthesis.</text>
</comment>
<comment type="subunit">
    <text evidence="1">Homotrimer.</text>
</comment>
<comment type="similarity">
    <text evidence="1">Belongs to the transferase hexapeptide repeat family. LpxD subfamily.</text>
</comment>
<keyword id="KW-0012">Acyltransferase</keyword>
<keyword id="KW-0441">Lipid A biosynthesis</keyword>
<keyword id="KW-0444">Lipid biosynthesis</keyword>
<keyword id="KW-0443">Lipid metabolism</keyword>
<keyword id="KW-1185">Reference proteome</keyword>
<keyword id="KW-0677">Repeat</keyword>
<keyword id="KW-0808">Transferase</keyword>
<protein>
    <recommendedName>
        <fullName evidence="1">UDP-3-O-acylglucosamine N-acyltransferase</fullName>
        <ecNumber evidence="1">2.3.1.191</ecNumber>
    </recommendedName>
</protein>
<name>LPXD_GLOC7</name>
<sequence length="349" mass="37020">MKFNLIIEQLDELIQSHSLTTNPDCNPDITQLAPLDEALSGHLSFIEGDKFASMIAKTNASALILPLNETLQTQATQQGIAWIATANPRLLFAHTIRLFYQPFRPSPGIHPTAVIDPDAQLGENVSIGANVVIQAGVKLGNEVCIHPNVVIYPGVTLGDRTILHGNCTIHERTVIGADCVIHSGAVIGSEGFGFVPTAEGWFKTEQSGITVLEDGVEVGCNSTIDRPAVGETRVKRNTKIDNLTHIAHGCQIGENCAFAAQVGLAGGVKVGNRVILAGQVGVANQAKIGDGAIASAQTGIPNDVAAGEIVSGSPCVPNKLYLKVSAIYKRLPEMYQALKQIQKQLEKNS</sequence>
<dbReference type="EC" id="2.3.1.191" evidence="1"/>
<dbReference type="EMBL" id="CP001291">
    <property type="protein sequence ID" value="ACK71885.1"/>
    <property type="molecule type" value="Genomic_DNA"/>
</dbReference>
<dbReference type="RefSeq" id="WP_015955479.1">
    <property type="nucleotide sequence ID" value="NC_011729.1"/>
</dbReference>
<dbReference type="SMR" id="B7KFG9"/>
<dbReference type="STRING" id="65393.PCC7424_3493"/>
<dbReference type="KEGG" id="cyc:PCC7424_3493"/>
<dbReference type="eggNOG" id="COG1044">
    <property type="taxonomic scope" value="Bacteria"/>
</dbReference>
<dbReference type="HOGENOM" id="CLU_049865_0_0_3"/>
<dbReference type="OrthoDB" id="9784739at2"/>
<dbReference type="UniPathway" id="UPA00973"/>
<dbReference type="Proteomes" id="UP000002384">
    <property type="component" value="Chromosome"/>
</dbReference>
<dbReference type="GO" id="GO:0031470">
    <property type="term" value="C:carboxysome"/>
    <property type="evidence" value="ECO:0007669"/>
    <property type="project" value="UniProtKB-ARBA"/>
</dbReference>
<dbReference type="GO" id="GO:0016020">
    <property type="term" value="C:membrane"/>
    <property type="evidence" value="ECO:0007669"/>
    <property type="project" value="GOC"/>
</dbReference>
<dbReference type="GO" id="GO:0016410">
    <property type="term" value="F:N-acyltransferase activity"/>
    <property type="evidence" value="ECO:0007669"/>
    <property type="project" value="InterPro"/>
</dbReference>
<dbReference type="GO" id="GO:0043886">
    <property type="term" value="F:structural constituent of carboxysome shell"/>
    <property type="evidence" value="ECO:0007669"/>
    <property type="project" value="UniProtKB-ARBA"/>
</dbReference>
<dbReference type="GO" id="GO:0009245">
    <property type="term" value="P:lipid A biosynthetic process"/>
    <property type="evidence" value="ECO:0007669"/>
    <property type="project" value="UniProtKB-UniRule"/>
</dbReference>
<dbReference type="CDD" id="cd03352">
    <property type="entry name" value="LbH_LpxD"/>
    <property type="match status" value="1"/>
</dbReference>
<dbReference type="Gene3D" id="2.160.10.10">
    <property type="entry name" value="Hexapeptide repeat proteins"/>
    <property type="match status" value="1"/>
</dbReference>
<dbReference type="Gene3D" id="3.40.1390.10">
    <property type="entry name" value="MurE/MurF, N-terminal domain"/>
    <property type="match status" value="1"/>
</dbReference>
<dbReference type="HAMAP" id="MF_00523">
    <property type="entry name" value="LpxD"/>
    <property type="match status" value="1"/>
</dbReference>
<dbReference type="InterPro" id="IPR001451">
    <property type="entry name" value="Hexapep"/>
</dbReference>
<dbReference type="InterPro" id="IPR007691">
    <property type="entry name" value="LpxD"/>
</dbReference>
<dbReference type="InterPro" id="IPR011004">
    <property type="entry name" value="Trimer_LpxA-like_sf"/>
</dbReference>
<dbReference type="InterPro" id="IPR020573">
    <property type="entry name" value="UDP_GlcNAc_AcTrfase_non-rep"/>
</dbReference>
<dbReference type="NCBIfam" id="TIGR01853">
    <property type="entry name" value="lipid_A_lpxD"/>
    <property type="match status" value="1"/>
</dbReference>
<dbReference type="NCBIfam" id="NF002060">
    <property type="entry name" value="PRK00892.1"/>
    <property type="match status" value="1"/>
</dbReference>
<dbReference type="PANTHER" id="PTHR43378">
    <property type="entry name" value="UDP-3-O-ACYLGLUCOSAMINE N-ACYLTRANSFERASE"/>
    <property type="match status" value="1"/>
</dbReference>
<dbReference type="PANTHER" id="PTHR43378:SF2">
    <property type="entry name" value="UDP-3-O-ACYLGLUCOSAMINE N-ACYLTRANSFERASE 1, MITOCHONDRIAL-RELATED"/>
    <property type="match status" value="1"/>
</dbReference>
<dbReference type="Pfam" id="PF00132">
    <property type="entry name" value="Hexapep"/>
    <property type="match status" value="2"/>
</dbReference>
<dbReference type="Pfam" id="PF04613">
    <property type="entry name" value="LpxD"/>
    <property type="match status" value="1"/>
</dbReference>
<dbReference type="SUPFAM" id="SSF51161">
    <property type="entry name" value="Trimeric LpxA-like enzymes"/>
    <property type="match status" value="1"/>
</dbReference>
<accession>B7KFG9</accession>
<feature type="chain" id="PRO_1000127674" description="UDP-3-O-acylglucosamine N-acyltransferase">
    <location>
        <begin position="1"/>
        <end position="349"/>
    </location>
</feature>
<feature type="active site" description="Proton acceptor" evidence="1">
    <location>
        <position position="248"/>
    </location>
</feature>
<reference key="1">
    <citation type="journal article" date="2011" name="MBio">
        <title>Novel metabolic attributes of the genus Cyanothece, comprising a group of unicellular nitrogen-fixing Cyanobacteria.</title>
        <authorList>
            <person name="Bandyopadhyay A."/>
            <person name="Elvitigala T."/>
            <person name="Welsh E."/>
            <person name="Stockel J."/>
            <person name="Liberton M."/>
            <person name="Min H."/>
            <person name="Sherman L.A."/>
            <person name="Pakrasi H.B."/>
        </authorList>
    </citation>
    <scope>NUCLEOTIDE SEQUENCE [LARGE SCALE GENOMIC DNA]</scope>
    <source>
        <strain>PCC 7424</strain>
    </source>
</reference>